<comment type="function">
    <text evidence="1">One of several proteins that assist in the late maturation steps of the functional core of the 30S ribosomal subunit. Associates with free 30S ribosomal subunits (but not with 30S subunits that are part of 70S ribosomes or polysomes). Required for efficient processing of 16S rRNA. May interact with the 5'-terminal helix region of 16S rRNA.</text>
</comment>
<comment type="subunit">
    <text evidence="1">Monomer. Binds 30S ribosomal subunits, but not 50S ribosomal subunits or 70S ribosomes.</text>
</comment>
<comment type="subcellular location">
    <subcellularLocation>
        <location evidence="1">Cytoplasm</location>
    </subcellularLocation>
</comment>
<comment type="similarity">
    <text evidence="1">Belongs to the RbfA family.</text>
</comment>
<sequence length="133" mass="15154">MAKEFGRPQRVAQEMQKEIALILQREIKDPRLGMMTTVSGVEMSRDLAYAKVYVTFLNDKDEDAVKAGIKALQEASGFIRSLLGKAMRLRIVPELTFFYDNSLVEGMRMSNLVTSVVKHDEERRVNPDDSKED</sequence>
<keyword id="KW-0963">Cytoplasm</keyword>
<keyword id="KW-0690">Ribosome biogenesis</keyword>
<gene>
    <name evidence="1" type="primary">rbfA</name>
    <name type="ordered locus">ECED1_3827</name>
</gene>
<reference key="1">
    <citation type="journal article" date="2009" name="PLoS Genet.">
        <title>Organised genome dynamics in the Escherichia coli species results in highly diverse adaptive paths.</title>
        <authorList>
            <person name="Touchon M."/>
            <person name="Hoede C."/>
            <person name="Tenaillon O."/>
            <person name="Barbe V."/>
            <person name="Baeriswyl S."/>
            <person name="Bidet P."/>
            <person name="Bingen E."/>
            <person name="Bonacorsi S."/>
            <person name="Bouchier C."/>
            <person name="Bouvet O."/>
            <person name="Calteau A."/>
            <person name="Chiapello H."/>
            <person name="Clermont O."/>
            <person name="Cruveiller S."/>
            <person name="Danchin A."/>
            <person name="Diard M."/>
            <person name="Dossat C."/>
            <person name="Karoui M.E."/>
            <person name="Frapy E."/>
            <person name="Garry L."/>
            <person name="Ghigo J.M."/>
            <person name="Gilles A.M."/>
            <person name="Johnson J."/>
            <person name="Le Bouguenec C."/>
            <person name="Lescat M."/>
            <person name="Mangenot S."/>
            <person name="Martinez-Jehanne V."/>
            <person name="Matic I."/>
            <person name="Nassif X."/>
            <person name="Oztas S."/>
            <person name="Petit M.A."/>
            <person name="Pichon C."/>
            <person name="Rouy Z."/>
            <person name="Ruf C.S."/>
            <person name="Schneider D."/>
            <person name="Tourret J."/>
            <person name="Vacherie B."/>
            <person name="Vallenet D."/>
            <person name="Medigue C."/>
            <person name="Rocha E.P.C."/>
            <person name="Denamur E."/>
        </authorList>
    </citation>
    <scope>NUCLEOTIDE SEQUENCE [LARGE SCALE GENOMIC DNA]</scope>
    <source>
        <strain>ED1a</strain>
    </source>
</reference>
<evidence type="ECO:0000255" key="1">
    <source>
        <dbReference type="HAMAP-Rule" id="MF_00003"/>
    </source>
</evidence>
<dbReference type="EMBL" id="CU928162">
    <property type="protein sequence ID" value="CAR09970.2"/>
    <property type="molecule type" value="Genomic_DNA"/>
</dbReference>
<dbReference type="RefSeq" id="WP_001040205.1">
    <property type="nucleotide sequence ID" value="NC_011745.1"/>
</dbReference>
<dbReference type="SMR" id="B7N0V2"/>
<dbReference type="GeneID" id="93778816"/>
<dbReference type="KEGG" id="ecq:ECED1_3827"/>
<dbReference type="HOGENOM" id="CLU_089475_5_0_6"/>
<dbReference type="Proteomes" id="UP000000748">
    <property type="component" value="Chromosome"/>
</dbReference>
<dbReference type="GO" id="GO:0005829">
    <property type="term" value="C:cytosol"/>
    <property type="evidence" value="ECO:0007669"/>
    <property type="project" value="TreeGrafter"/>
</dbReference>
<dbReference type="GO" id="GO:0043024">
    <property type="term" value="F:ribosomal small subunit binding"/>
    <property type="evidence" value="ECO:0007669"/>
    <property type="project" value="TreeGrafter"/>
</dbReference>
<dbReference type="GO" id="GO:0030490">
    <property type="term" value="P:maturation of SSU-rRNA"/>
    <property type="evidence" value="ECO:0007669"/>
    <property type="project" value="UniProtKB-UniRule"/>
</dbReference>
<dbReference type="FunFam" id="3.30.300.20:FF:000007">
    <property type="entry name" value="Ribosome-binding factor A"/>
    <property type="match status" value="1"/>
</dbReference>
<dbReference type="Gene3D" id="3.30.300.20">
    <property type="match status" value="1"/>
</dbReference>
<dbReference type="HAMAP" id="MF_00003">
    <property type="entry name" value="RbfA"/>
    <property type="match status" value="1"/>
</dbReference>
<dbReference type="InterPro" id="IPR015946">
    <property type="entry name" value="KH_dom-like_a/b"/>
</dbReference>
<dbReference type="InterPro" id="IPR000238">
    <property type="entry name" value="RbfA"/>
</dbReference>
<dbReference type="InterPro" id="IPR023799">
    <property type="entry name" value="RbfA_dom_sf"/>
</dbReference>
<dbReference type="InterPro" id="IPR020053">
    <property type="entry name" value="Ribosome-bd_factorA_CS"/>
</dbReference>
<dbReference type="NCBIfam" id="TIGR00082">
    <property type="entry name" value="rbfA"/>
    <property type="match status" value="1"/>
</dbReference>
<dbReference type="PANTHER" id="PTHR33515">
    <property type="entry name" value="RIBOSOME-BINDING FACTOR A, CHLOROPLASTIC-RELATED"/>
    <property type="match status" value="1"/>
</dbReference>
<dbReference type="PANTHER" id="PTHR33515:SF1">
    <property type="entry name" value="RIBOSOME-BINDING FACTOR A, CHLOROPLASTIC-RELATED"/>
    <property type="match status" value="1"/>
</dbReference>
<dbReference type="Pfam" id="PF02033">
    <property type="entry name" value="RBFA"/>
    <property type="match status" value="1"/>
</dbReference>
<dbReference type="SUPFAM" id="SSF89919">
    <property type="entry name" value="Ribosome-binding factor A, RbfA"/>
    <property type="match status" value="1"/>
</dbReference>
<dbReference type="PROSITE" id="PS01319">
    <property type="entry name" value="RBFA"/>
    <property type="match status" value="1"/>
</dbReference>
<feature type="chain" id="PRO_1000193259" description="Ribosome-binding factor A">
    <location>
        <begin position="1"/>
        <end position="133"/>
    </location>
</feature>
<proteinExistence type="inferred from homology"/>
<name>RBFA_ECO81</name>
<protein>
    <recommendedName>
        <fullName evidence="1">Ribosome-binding factor A</fullName>
    </recommendedName>
</protein>
<accession>B7N0V2</accession>
<organism>
    <name type="scientific">Escherichia coli O81 (strain ED1a)</name>
    <dbReference type="NCBI Taxonomy" id="585397"/>
    <lineage>
        <taxon>Bacteria</taxon>
        <taxon>Pseudomonadati</taxon>
        <taxon>Pseudomonadota</taxon>
        <taxon>Gammaproteobacteria</taxon>
        <taxon>Enterobacterales</taxon>
        <taxon>Enterobacteriaceae</taxon>
        <taxon>Escherichia</taxon>
    </lineage>
</organism>